<name>GYRB_STAAM</name>
<reference key="1">
    <citation type="journal article" date="2001" name="Lancet">
        <title>Whole genome sequencing of meticillin-resistant Staphylococcus aureus.</title>
        <authorList>
            <person name="Kuroda M."/>
            <person name="Ohta T."/>
            <person name="Uchiyama I."/>
            <person name="Baba T."/>
            <person name="Yuzawa H."/>
            <person name="Kobayashi I."/>
            <person name="Cui L."/>
            <person name="Oguchi A."/>
            <person name="Aoki K."/>
            <person name="Nagai Y."/>
            <person name="Lian J.-Q."/>
            <person name="Ito T."/>
            <person name="Kanamori M."/>
            <person name="Matsumaru H."/>
            <person name="Maruyama A."/>
            <person name="Murakami H."/>
            <person name="Hosoyama A."/>
            <person name="Mizutani-Ui Y."/>
            <person name="Takahashi N.K."/>
            <person name="Sawano T."/>
            <person name="Inoue R."/>
            <person name="Kaito C."/>
            <person name="Sekimizu K."/>
            <person name="Hirakawa H."/>
            <person name="Kuhara S."/>
            <person name="Goto S."/>
            <person name="Yabuzaki J."/>
            <person name="Kanehisa M."/>
            <person name="Yamashita A."/>
            <person name="Oshima K."/>
            <person name="Furuya K."/>
            <person name="Yoshino C."/>
            <person name="Shiba T."/>
            <person name="Hattori M."/>
            <person name="Ogasawara N."/>
            <person name="Hayashi H."/>
            <person name="Hiramatsu K."/>
        </authorList>
    </citation>
    <scope>NUCLEOTIDE SEQUENCE [LARGE SCALE GENOMIC DNA]</scope>
    <source>
        <strain>Mu50 / ATCC 700699</strain>
    </source>
</reference>
<accession>P66936</accession>
<accession>Q99XG6</accession>
<dbReference type="EC" id="5.6.2.2" evidence="2"/>
<dbReference type="EMBL" id="BA000017">
    <property type="protein sequence ID" value="BAB56167.1"/>
    <property type="molecule type" value="Genomic_DNA"/>
</dbReference>
<dbReference type="RefSeq" id="WP_000255578.1">
    <property type="nucleotide sequence ID" value="NC_002758.2"/>
</dbReference>
<dbReference type="BMRB" id="P66936"/>
<dbReference type="SMR" id="P66936"/>
<dbReference type="BindingDB" id="P66936"/>
<dbReference type="KEGG" id="sav:SAV0005"/>
<dbReference type="HOGENOM" id="CLU_006146_1_2_9"/>
<dbReference type="PhylomeDB" id="P66936"/>
<dbReference type="Proteomes" id="UP000002481">
    <property type="component" value="Chromosome"/>
</dbReference>
<dbReference type="GO" id="GO:0005694">
    <property type="term" value="C:chromosome"/>
    <property type="evidence" value="ECO:0007669"/>
    <property type="project" value="InterPro"/>
</dbReference>
<dbReference type="GO" id="GO:0005737">
    <property type="term" value="C:cytoplasm"/>
    <property type="evidence" value="ECO:0007669"/>
    <property type="project" value="UniProtKB-SubCell"/>
</dbReference>
<dbReference type="GO" id="GO:0005524">
    <property type="term" value="F:ATP binding"/>
    <property type="evidence" value="ECO:0007669"/>
    <property type="project" value="UniProtKB-UniRule"/>
</dbReference>
<dbReference type="GO" id="GO:0003677">
    <property type="term" value="F:DNA binding"/>
    <property type="evidence" value="ECO:0007669"/>
    <property type="project" value="UniProtKB-KW"/>
</dbReference>
<dbReference type="GO" id="GO:0034335">
    <property type="term" value="F:DNA negative supercoiling activity"/>
    <property type="evidence" value="ECO:0007669"/>
    <property type="project" value="UniProtKB-ARBA"/>
</dbReference>
<dbReference type="GO" id="GO:0046872">
    <property type="term" value="F:metal ion binding"/>
    <property type="evidence" value="ECO:0007669"/>
    <property type="project" value="UniProtKB-KW"/>
</dbReference>
<dbReference type="GO" id="GO:0006265">
    <property type="term" value="P:DNA topological change"/>
    <property type="evidence" value="ECO:0007669"/>
    <property type="project" value="UniProtKB-UniRule"/>
</dbReference>
<dbReference type="GO" id="GO:0006261">
    <property type="term" value="P:DNA-templated DNA replication"/>
    <property type="evidence" value="ECO:0007669"/>
    <property type="project" value="UniProtKB-UniRule"/>
</dbReference>
<dbReference type="CDD" id="cd16928">
    <property type="entry name" value="HATPase_GyrB-like"/>
    <property type="match status" value="1"/>
</dbReference>
<dbReference type="CDD" id="cd00822">
    <property type="entry name" value="TopoII_Trans_DNA_gyrase"/>
    <property type="match status" value="1"/>
</dbReference>
<dbReference type="CDD" id="cd03366">
    <property type="entry name" value="TOPRIM_TopoIIA_GyrB"/>
    <property type="match status" value="1"/>
</dbReference>
<dbReference type="FunFam" id="3.30.230.10:FF:000005">
    <property type="entry name" value="DNA gyrase subunit B"/>
    <property type="match status" value="1"/>
</dbReference>
<dbReference type="FunFam" id="3.30.565.10:FF:000002">
    <property type="entry name" value="DNA gyrase subunit B"/>
    <property type="match status" value="1"/>
</dbReference>
<dbReference type="FunFam" id="3.40.50.670:FF:000002">
    <property type="entry name" value="DNA gyrase subunit B"/>
    <property type="match status" value="1"/>
</dbReference>
<dbReference type="Gene3D" id="3.30.230.10">
    <property type="match status" value="1"/>
</dbReference>
<dbReference type="Gene3D" id="3.40.50.670">
    <property type="match status" value="1"/>
</dbReference>
<dbReference type="Gene3D" id="3.30.565.10">
    <property type="entry name" value="Histidine kinase-like ATPase, C-terminal domain"/>
    <property type="match status" value="1"/>
</dbReference>
<dbReference type="HAMAP" id="MF_01898">
    <property type="entry name" value="GyrB"/>
    <property type="match status" value="1"/>
</dbReference>
<dbReference type="InterPro" id="IPR002288">
    <property type="entry name" value="DNA_gyrase_B_C"/>
</dbReference>
<dbReference type="InterPro" id="IPR011557">
    <property type="entry name" value="GyrB"/>
</dbReference>
<dbReference type="InterPro" id="IPR036890">
    <property type="entry name" value="HATPase_C_sf"/>
</dbReference>
<dbReference type="InterPro" id="IPR020568">
    <property type="entry name" value="Ribosomal_Su5_D2-typ_SF"/>
</dbReference>
<dbReference type="InterPro" id="IPR014721">
    <property type="entry name" value="Ribsml_uS5_D2-typ_fold_subgr"/>
</dbReference>
<dbReference type="InterPro" id="IPR001241">
    <property type="entry name" value="Topo_IIA"/>
</dbReference>
<dbReference type="InterPro" id="IPR013760">
    <property type="entry name" value="Topo_IIA-like_dom_sf"/>
</dbReference>
<dbReference type="InterPro" id="IPR000565">
    <property type="entry name" value="Topo_IIA_B"/>
</dbReference>
<dbReference type="InterPro" id="IPR013759">
    <property type="entry name" value="Topo_IIA_B_C"/>
</dbReference>
<dbReference type="InterPro" id="IPR013506">
    <property type="entry name" value="Topo_IIA_bsu_dom2"/>
</dbReference>
<dbReference type="InterPro" id="IPR018522">
    <property type="entry name" value="TopoIIA_CS"/>
</dbReference>
<dbReference type="InterPro" id="IPR006171">
    <property type="entry name" value="TOPRIM_dom"/>
</dbReference>
<dbReference type="InterPro" id="IPR034160">
    <property type="entry name" value="TOPRIM_GyrB"/>
</dbReference>
<dbReference type="NCBIfam" id="TIGR01059">
    <property type="entry name" value="gyrB"/>
    <property type="match status" value="1"/>
</dbReference>
<dbReference type="NCBIfam" id="NF004189">
    <property type="entry name" value="PRK05644.1"/>
    <property type="match status" value="1"/>
</dbReference>
<dbReference type="NCBIfam" id="NF011501">
    <property type="entry name" value="PRK14939.1"/>
    <property type="match status" value="1"/>
</dbReference>
<dbReference type="PANTHER" id="PTHR45866:SF1">
    <property type="entry name" value="DNA GYRASE SUBUNIT B, MITOCHONDRIAL"/>
    <property type="match status" value="1"/>
</dbReference>
<dbReference type="PANTHER" id="PTHR45866">
    <property type="entry name" value="DNA GYRASE/TOPOISOMERASE SUBUNIT B"/>
    <property type="match status" value="1"/>
</dbReference>
<dbReference type="Pfam" id="PF00204">
    <property type="entry name" value="DNA_gyraseB"/>
    <property type="match status" value="1"/>
</dbReference>
<dbReference type="Pfam" id="PF00986">
    <property type="entry name" value="DNA_gyraseB_C"/>
    <property type="match status" value="1"/>
</dbReference>
<dbReference type="Pfam" id="PF02518">
    <property type="entry name" value="HATPase_c"/>
    <property type="match status" value="1"/>
</dbReference>
<dbReference type="Pfam" id="PF01751">
    <property type="entry name" value="Toprim"/>
    <property type="match status" value="1"/>
</dbReference>
<dbReference type="PRINTS" id="PR01159">
    <property type="entry name" value="DNAGYRASEB"/>
</dbReference>
<dbReference type="PRINTS" id="PR00418">
    <property type="entry name" value="TPI2FAMILY"/>
</dbReference>
<dbReference type="SMART" id="SM00387">
    <property type="entry name" value="HATPase_c"/>
    <property type="match status" value="1"/>
</dbReference>
<dbReference type="SMART" id="SM00433">
    <property type="entry name" value="TOP2c"/>
    <property type="match status" value="1"/>
</dbReference>
<dbReference type="SUPFAM" id="SSF55874">
    <property type="entry name" value="ATPase domain of HSP90 chaperone/DNA topoisomerase II/histidine kinase"/>
    <property type="match status" value="1"/>
</dbReference>
<dbReference type="SUPFAM" id="SSF54211">
    <property type="entry name" value="Ribosomal protein S5 domain 2-like"/>
    <property type="match status" value="1"/>
</dbReference>
<dbReference type="SUPFAM" id="SSF56719">
    <property type="entry name" value="Type II DNA topoisomerase"/>
    <property type="match status" value="1"/>
</dbReference>
<dbReference type="PROSITE" id="PS00177">
    <property type="entry name" value="TOPOISOMERASE_II"/>
    <property type="match status" value="1"/>
</dbReference>
<dbReference type="PROSITE" id="PS50880">
    <property type="entry name" value="TOPRIM"/>
    <property type="match status" value="1"/>
</dbReference>
<evidence type="ECO:0000250" key="1"/>
<evidence type="ECO:0000255" key="2">
    <source>
        <dbReference type="HAMAP-Rule" id="MF_01898"/>
    </source>
</evidence>
<gene>
    <name evidence="2" type="primary">gyrB</name>
    <name type="ordered locus">SAV0005</name>
</gene>
<proteinExistence type="inferred from homology"/>
<sequence length="644" mass="72540">MVTALSDVNNTDNYGAGQIQVLEGLEAVRKRPGMYIGSTSERGLHHLVWEIVDNSIDEALAGYANKIEVVIEKDNWIKVTDNGRGIPVDIQEKMGRPAVEVILTVLHAGGKFGGGGYKVSGGLHGVGSSVVNALSQDLEVYVHRNETIYHQAYKKGVPQFDLKEVGTTDKTGTVIRFKADGEIFTETTVYNYETLQQRIRELAFLNKGIQITLRDERDEENVREDSYHYEGGIKSYVELLNENKEPIHDEPIYIHQSKDDIEVEIAIQYNSGYATNLLTYANNIHTYEGGTHEDGFKRALTRVLNSYGLSSKIMKEEKDRLSGEDTREGMTAIISIKHGDPQFEGQTKTKLGNSEVRQVVDKLFSEHFERFLYENPQVARTVVEKGIMAARARVAAKKAREVTRRKSALDVASLPGKLADCSSKSPEECEIFLVEGDSAGGSTKSGRDSRTQAILPLRGKILNVEKARLDRILNNNEIRQMITAFGTGIGGDFDLAKARYHKIVIMTDADVDGAHIRTLLLTFFYRFMRPLIEAGYVYIAQPPLYKLTQGKQKYYVYNDRELDKLKSELNPTPKWSIARYKGLGEMNADQLWETTMNPEHRALLQVKLEDAIEADQTFEMLMGDVVENRRQFIEDNAVYANLDF</sequence>
<protein>
    <recommendedName>
        <fullName evidence="2">DNA gyrase subunit B</fullName>
        <ecNumber evidence="2">5.6.2.2</ecNumber>
    </recommendedName>
</protein>
<keyword id="KW-0067">ATP-binding</keyword>
<keyword id="KW-0963">Cytoplasm</keyword>
<keyword id="KW-0238">DNA-binding</keyword>
<keyword id="KW-0413">Isomerase</keyword>
<keyword id="KW-0460">Magnesium</keyword>
<keyword id="KW-0479">Metal-binding</keyword>
<keyword id="KW-0547">Nucleotide-binding</keyword>
<keyword id="KW-0799">Topoisomerase</keyword>
<feature type="initiator methionine" description="Removed" evidence="1">
    <location>
        <position position="1"/>
    </location>
</feature>
<feature type="chain" id="PRO_0000145338" description="DNA gyrase subunit B">
    <location>
        <begin position="2"/>
        <end position="644"/>
    </location>
</feature>
<feature type="domain" description="Toprim" evidence="2">
    <location>
        <begin position="429"/>
        <end position="543"/>
    </location>
</feature>
<feature type="binding site" evidence="2">
    <location>
        <position position="435"/>
    </location>
    <ligand>
        <name>Mg(2+)</name>
        <dbReference type="ChEBI" id="CHEBI:18420"/>
        <label>1</label>
        <note>catalytic</note>
    </ligand>
</feature>
<feature type="binding site" evidence="2">
    <location>
        <position position="508"/>
    </location>
    <ligand>
        <name>Mg(2+)</name>
        <dbReference type="ChEBI" id="CHEBI:18420"/>
        <label>1</label>
        <note>catalytic</note>
    </ligand>
</feature>
<feature type="binding site" evidence="2">
    <location>
        <position position="508"/>
    </location>
    <ligand>
        <name>Mg(2+)</name>
        <dbReference type="ChEBI" id="CHEBI:18420"/>
        <label>2</label>
    </ligand>
</feature>
<feature type="binding site" evidence="2">
    <location>
        <position position="510"/>
    </location>
    <ligand>
        <name>Mg(2+)</name>
        <dbReference type="ChEBI" id="CHEBI:18420"/>
        <label>2</label>
    </ligand>
</feature>
<feature type="site" description="Interaction with DNA" evidence="2">
    <location>
        <position position="460"/>
    </location>
</feature>
<feature type="site" description="Interaction with DNA" evidence="2">
    <location>
        <position position="463"/>
    </location>
</feature>
<organism>
    <name type="scientific">Staphylococcus aureus (strain Mu50 / ATCC 700699)</name>
    <dbReference type="NCBI Taxonomy" id="158878"/>
    <lineage>
        <taxon>Bacteria</taxon>
        <taxon>Bacillati</taxon>
        <taxon>Bacillota</taxon>
        <taxon>Bacilli</taxon>
        <taxon>Bacillales</taxon>
        <taxon>Staphylococcaceae</taxon>
        <taxon>Staphylococcus</taxon>
    </lineage>
</organism>
<comment type="function">
    <text evidence="2">A type II topoisomerase that negatively supercoils closed circular double-stranded (ds) DNA in an ATP-dependent manner to modulate DNA topology and maintain chromosomes in an underwound state. Negative supercoiling favors strand separation, and DNA replication, transcription, recombination and repair, all of which involve strand separation. Also able to catalyze the interconversion of other topological isomers of dsDNA rings, including catenanes and knotted rings. Type II topoisomerases break and join 2 DNA strands simultaneously in an ATP-dependent manner.</text>
</comment>
<comment type="catalytic activity">
    <reaction evidence="2">
        <text>ATP-dependent breakage, passage and rejoining of double-stranded DNA.</text>
        <dbReference type="EC" id="5.6.2.2"/>
    </reaction>
</comment>
<comment type="cofactor">
    <cofactor evidence="2">
        <name>Mg(2+)</name>
        <dbReference type="ChEBI" id="CHEBI:18420"/>
    </cofactor>
    <cofactor evidence="2">
        <name>Mn(2+)</name>
        <dbReference type="ChEBI" id="CHEBI:29035"/>
    </cofactor>
    <cofactor evidence="2">
        <name>Ca(2+)</name>
        <dbReference type="ChEBI" id="CHEBI:29108"/>
    </cofactor>
    <text evidence="2">Binds two Mg(2+) per subunit. The magnesium ions form salt bridges with both the protein and the DNA. Can also accept other divalent metal cations, such as Mn(2+) or Ca(2+).</text>
</comment>
<comment type="subunit">
    <text evidence="2">Heterotetramer, composed of two GyrA and two GyrB chains. In the heterotetramer, GyrA contains the active site tyrosine that forms a transient covalent intermediate with DNA, while GyrB binds cofactors and catalyzes ATP hydrolysis.</text>
</comment>
<comment type="subcellular location">
    <subcellularLocation>
        <location evidence="2">Cytoplasm</location>
    </subcellularLocation>
</comment>
<comment type="miscellaneous">
    <text evidence="2">Few gyrases are as efficient as E.coli at forming negative supercoils. Not all organisms have 2 type II topoisomerases; in organisms with a single type II topoisomerase this enzyme also has to decatenate newly replicated chromosomes.</text>
</comment>
<comment type="similarity">
    <text evidence="2">Belongs to the type II topoisomerase GyrB family.</text>
</comment>